<comment type="catalytic activity">
    <reaction evidence="1">
        <text>1-(5-phospho-beta-D-ribosyl)-5-[(5-phospho-beta-D-ribosylamino)methylideneamino]imidazole-4-carboxamide = 5-[(5-phospho-1-deoxy-D-ribulos-1-ylimino)methylamino]-1-(5-phospho-beta-D-ribosyl)imidazole-4-carboxamide</text>
        <dbReference type="Rhea" id="RHEA:15469"/>
        <dbReference type="ChEBI" id="CHEBI:58435"/>
        <dbReference type="ChEBI" id="CHEBI:58525"/>
        <dbReference type="EC" id="5.3.1.16"/>
    </reaction>
</comment>
<comment type="pathway">
    <text evidence="1">Amino-acid biosynthesis; L-histidine biosynthesis; L-histidine from 5-phospho-alpha-D-ribose 1-diphosphate: step 4/9.</text>
</comment>
<comment type="subcellular location">
    <subcellularLocation>
        <location evidence="1">Cytoplasm</location>
    </subcellularLocation>
</comment>
<comment type="similarity">
    <text evidence="1">Belongs to the HisA/HisF family.</text>
</comment>
<proteinExistence type="inferred from homology"/>
<gene>
    <name evidence="1" type="primary">hisA</name>
    <name type="ordered locus">BR2084</name>
    <name type="ordered locus">BS1330_I2078</name>
</gene>
<keyword id="KW-0028">Amino-acid biosynthesis</keyword>
<keyword id="KW-0963">Cytoplasm</keyword>
<keyword id="KW-0368">Histidine biosynthesis</keyword>
<keyword id="KW-0413">Isomerase</keyword>
<dbReference type="EC" id="5.3.1.16" evidence="1"/>
<dbReference type="EMBL" id="AE014291">
    <property type="protein sequence ID" value="AAN30974.1"/>
    <property type="molecule type" value="Genomic_DNA"/>
</dbReference>
<dbReference type="EMBL" id="CP002997">
    <property type="protein sequence ID" value="AEM19391.1"/>
    <property type="molecule type" value="Genomic_DNA"/>
</dbReference>
<dbReference type="RefSeq" id="WP_006191043.1">
    <property type="nucleotide sequence ID" value="NZ_KN046804.1"/>
</dbReference>
<dbReference type="SMR" id="Q8FY08"/>
<dbReference type="GeneID" id="45053013"/>
<dbReference type="KEGG" id="bms:BR2084"/>
<dbReference type="KEGG" id="bsi:BS1330_I2078"/>
<dbReference type="PATRIC" id="fig|204722.22.peg.1930"/>
<dbReference type="HOGENOM" id="CLU_048577_1_1_5"/>
<dbReference type="PhylomeDB" id="Q8FY08"/>
<dbReference type="UniPathway" id="UPA00031">
    <property type="reaction ID" value="UER00009"/>
</dbReference>
<dbReference type="Proteomes" id="UP000007104">
    <property type="component" value="Chromosome I"/>
</dbReference>
<dbReference type="GO" id="GO:0005737">
    <property type="term" value="C:cytoplasm"/>
    <property type="evidence" value="ECO:0007669"/>
    <property type="project" value="UniProtKB-SubCell"/>
</dbReference>
<dbReference type="GO" id="GO:0003949">
    <property type="term" value="F:1-(5-phosphoribosyl)-5-[(5-phosphoribosylamino)methylideneamino]imidazole-4-carboxamide isomerase activity"/>
    <property type="evidence" value="ECO:0007669"/>
    <property type="project" value="UniProtKB-UniRule"/>
</dbReference>
<dbReference type="GO" id="GO:0000105">
    <property type="term" value="P:L-histidine biosynthetic process"/>
    <property type="evidence" value="ECO:0007669"/>
    <property type="project" value="UniProtKB-UniRule"/>
</dbReference>
<dbReference type="GO" id="GO:0000162">
    <property type="term" value="P:L-tryptophan biosynthetic process"/>
    <property type="evidence" value="ECO:0007669"/>
    <property type="project" value="TreeGrafter"/>
</dbReference>
<dbReference type="CDD" id="cd04732">
    <property type="entry name" value="HisA"/>
    <property type="match status" value="1"/>
</dbReference>
<dbReference type="FunFam" id="3.20.20.70:FF:000009">
    <property type="entry name" value="1-(5-phosphoribosyl)-5-[(5-phosphoribosylamino)methylideneamino] imidazole-4-carboxamide isomerase"/>
    <property type="match status" value="1"/>
</dbReference>
<dbReference type="Gene3D" id="3.20.20.70">
    <property type="entry name" value="Aldolase class I"/>
    <property type="match status" value="1"/>
</dbReference>
<dbReference type="HAMAP" id="MF_01014">
    <property type="entry name" value="HisA"/>
    <property type="match status" value="1"/>
</dbReference>
<dbReference type="InterPro" id="IPR013785">
    <property type="entry name" value="Aldolase_TIM"/>
</dbReference>
<dbReference type="InterPro" id="IPR006062">
    <property type="entry name" value="His_biosynth"/>
</dbReference>
<dbReference type="InterPro" id="IPR006063">
    <property type="entry name" value="HisA_bact_arch"/>
</dbReference>
<dbReference type="InterPro" id="IPR044524">
    <property type="entry name" value="Isoase_HisA-like"/>
</dbReference>
<dbReference type="InterPro" id="IPR023016">
    <property type="entry name" value="Isoase_HisA-like_bact"/>
</dbReference>
<dbReference type="InterPro" id="IPR011060">
    <property type="entry name" value="RibuloseP-bd_barrel"/>
</dbReference>
<dbReference type="NCBIfam" id="TIGR00007">
    <property type="entry name" value="1-(5-phosphoribosyl)-5-[(5-phosphoribosylamino)methylideneamino]imidazole-4-carboxamide isomerase"/>
    <property type="match status" value="1"/>
</dbReference>
<dbReference type="PANTHER" id="PTHR43090">
    <property type="entry name" value="1-(5-PHOSPHORIBOSYL)-5-[(5-PHOSPHORIBOSYLAMINO)METHYLIDENEAMINO] IMIDAZOLE-4-CARBOXAMIDE ISOMERASE"/>
    <property type="match status" value="1"/>
</dbReference>
<dbReference type="PANTHER" id="PTHR43090:SF2">
    <property type="entry name" value="1-(5-PHOSPHORIBOSYL)-5-[(5-PHOSPHORIBOSYLAMINO)METHYLIDENEAMINO] IMIDAZOLE-4-CARBOXAMIDE ISOMERASE"/>
    <property type="match status" value="1"/>
</dbReference>
<dbReference type="Pfam" id="PF00977">
    <property type="entry name" value="His_biosynth"/>
    <property type="match status" value="1"/>
</dbReference>
<dbReference type="SUPFAM" id="SSF51366">
    <property type="entry name" value="Ribulose-phoshate binding barrel"/>
    <property type="match status" value="1"/>
</dbReference>
<organism>
    <name type="scientific">Brucella suis biovar 1 (strain 1330)</name>
    <dbReference type="NCBI Taxonomy" id="204722"/>
    <lineage>
        <taxon>Bacteria</taxon>
        <taxon>Pseudomonadati</taxon>
        <taxon>Pseudomonadota</taxon>
        <taxon>Alphaproteobacteria</taxon>
        <taxon>Hyphomicrobiales</taxon>
        <taxon>Brucellaceae</taxon>
        <taxon>Brucella/Ochrobactrum group</taxon>
        <taxon>Brucella</taxon>
    </lineage>
</organism>
<accession>Q8FY08</accession>
<accession>G0K932</accession>
<sequence>MILFPAIDLKDGQCVRLKLGDMDQAIIYNEDPAAQAKAFEDQGFEWLHVVDLNGAFAGESVNGTAVEAILKATKNPVQLGGGIRTLAHIENWLSRGLRRVILGTVAVRDPALVMEACKAFPGQVAVGIDAKGGKVAVEGWAEASRLGVIELAKKFEGAGVAAIIYTDIDRDGVLAGINWDSTLALAEAVSIPVIASGGLASMEDIRRLATPEMRKLEGAISGRALYDGRIDPAEALSVLRAAA</sequence>
<protein>
    <recommendedName>
        <fullName evidence="1">1-(5-phosphoribosyl)-5-[(5-phosphoribosylamino)methylideneamino] imidazole-4-carboxamide isomerase</fullName>
        <ecNumber evidence="1">5.3.1.16</ecNumber>
    </recommendedName>
    <alternativeName>
        <fullName evidence="1">Phosphoribosylformimino-5-aminoimidazole carboxamide ribotide isomerase</fullName>
    </alternativeName>
</protein>
<evidence type="ECO:0000255" key="1">
    <source>
        <dbReference type="HAMAP-Rule" id="MF_01014"/>
    </source>
</evidence>
<name>HIS4_BRUSU</name>
<feature type="chain" id="PRO_0000141986" description="1-(5-phosphoribosyl)-5-[(5-phosphoribosylamino)methylideneamino] imidazole-4-carboxamide isomerase">
    <location>
        <begin position="1"/>
        <end position="243"/>
    </location>
</feature>
<feature type="active site" description="Proton acceptor" evidence="1">
    <location>
        <position position="8"/>
    </location>
</feature>
<feature type="active site" description="Proton donor" evidence="1">
    <location>
        <position position="129"/>
    </location>
</feature>
<reference key="1">
    <citation type="journal article" date="2002" name="Proc. Natl. Acad. Sci. U.S.A.">
        <title>The Brucella suis genome reveals fundamental similarities between animal and plant pathogens and symbionts.</title>
        <authorList>
            <person name="Paulsen I.T."/>
            <person name="Seshadri R."/>
            <person name="Nelson K.E."/>
            <person name="Eisen J.A."/>
            <person name="Heidelberg J.F."/>
            <person name="Read T.D."/>
            <person name="Dodson R.J."/>
            <person name="Umayam L.A."/>
            <person name="Brinkac L.M."/>
            <person name="Beanan M.J."/>
            <person name="Daugherty S.C."/>
            <person name="DeBoy R.T."/>
            <person name="Durkin A.S."/>
            <person name="Kolonay J.F."/>
            <person name="Madupu R."/>
            <person name="Nelson W.C."/>
            <person name="Ayodeji B."/>
            <person name="Kraul M."/>
            <person name="Shetty J."/>
            <person name="Malek J.A."/>
            <person name="Van Aken S.E."/>
            <person name="Riedmuller S."/>
            <person name="Tettelin H."/>
            <person name="Gill S.R."/>
            <person name="White O."/>
            <person name="Salzberg S.L."/>
            <person name="Hoover D.L."/>
            <person name="Lindler L.E."/>
            <person name="Halling S.M."/>
            <person name="Boyle S.M."/>
            <person name="Fraser C.M."/>
        </authorList>
    </citation>
    <scope>NUCLEOTIDE SEQUENCE [LARGE SCALE GENOMIC DNA]</scope>
    <source>
        <strain>1330</strain>
    </source>
</reference>
<reference key="2">
    <citation type="journal article" date="2011" name="J. Bacteriol.">
        <title>Revised genome sequence of Brucella suis 1330.</title>
        <authorList>
            <person name="Tae H."/>
            <person name="Shallom S."/>
            <person name="Settlage R."/>
            <person name="Preston D."/>
            <person name="Adams L.G."/>
            <person name="Garner H.R."/>
        </authorList>
    </citation>
    <scope>NUCLEOTIDE SEQUENCE [LARGE SCALE GENOMIC DNA]</scope>
    <source>
        <strain>1330</strain>
    </source>
</reference>